<comment type="function">
    <text evidence="1">Catalyzes the conversion of 3-deoxy-D-arabino-heptulosonate 7-phosphate (DAHP) to dehydroquinate (DHQ).</text>
</comment>
<comment type="catalytic activity">
    <reaction evidence="1">
        <text>7-phospho-2-dehydro-3-deoxy-D-arabino-heptonate = 3-dehydroquinate + phosphate</text>
        <dbReference type="Rhea" id="RHEA:21968"/>
        <dbReference type="ChEBI" id="CHEBI:32364"/>
        <dbReference type="ChEBI" id="CHEBI:43474"/>
        <dbReference type="ChEBI" id="CHEBI:58394"/>
        <dbReference type="EC" id="4.2.3.4"/>
    </reaction>
</comment>
<comment type="cofactor">
    <cofactor evidence="1">
        <name>Co(2+)</name>
        <dbReference type="ChEBI" id="CHEBI:48828"/>
    </cofactor>
    <cofactor evidence="1">
        <name>Zn(2+)</name>
        <dbReference type="ChEBI" id="CHEBI:29105"/>
    </cofactor>
    <text evidence="1">Binds 1 divalent metal cation per subunit. Can use either Co(2+) or Zn(2+).</text>
</comment>
<comment type="cofactor">
    <cofactor evidence="1">
        <name>NAD(+)</name>
        <dbReference type="ChEBI" id="CHEBI:57540"/>
    </cofactor>
</comment>
<comment type="pathway">
    <text evidence="1">Metabolic intermediate biosynthesis; chorismate biosynthesis; chorismate from D-erythrose 4-phosphate and phosphoenolpyruvate: step 2/7.</text>
</comment>
<comment type="subcellular location">
    <subcellularLocation>
        <location evidence="1">Cytoplasm</location>
    </subcellularLocation>
</comment>
<comment type="similarity">
    <text evidence="1">Belongs to the sugar phosphate cyclases superfamily. Dehydroquinate synthase family.</text>
</comment>
<dbReference type="EC" id="4.2.3.4" evidence="1"/>
<dbReference type="EMBL" id="CP000463">
    <property type="protein sequence ID" value="ABJ04105.1"/>
    <property type="molecule type" value="Genomic_DNA"/>
</dbReference>
<dbReference type="SMR" id="Q07VC9"/>
<dbReference type="STRING" id="316055.RPE_0144"/>
<dbReference type="KEGG" id="rpe:RPE_0144"/>
<dbReference type="eggNOG" id="COG0337">
    <property type="taxonomic scope" value="Bacteria"/>
</dbReference>
<dbReference type="HOGENOM" id="CLU_001201_0_2_5"/>
<dbReference type="OrthoDB" id="9806583at2"/>
<dbReference type="UniPathway" id="UPA00053">
    <property type="reaction ID" value="UER00085"/>
</dbReference>
<dbReference type="GO" id="GO:0005737">
    <property type="term" value="C:cytoplasm"/>
    <property type="evidence" value="ECO:0007669"/>
    <property type="project" value="UniProtKB-SubCell"/>
</dbReference>
<dbReference type="GO" id="GO:0003856">
    <property type="term" value="F:3-dehydroquinate synthase activity"/>
    <property type="evidence" value="ECO:0007669"/>
    <property type="project" value="UniProtKB-UniRule"/>
</dbReference>
<dbReference type="GO" id="GO:0046872">
    <property type="term" value="F:metal ion binding"/>
    <property type="evidence" value="ECO:0007669"/>
    <property type="project" value="UniProtKB-KW"/>
</dbReference>
<dbReference type="GO" id="GO:0000166">
    <property type="term" value="F:nucleotide binding"/>
    <property type="evidence" value="ECO:0007669"/>
    <property type="project" value="UniProtKB-KW"/>
</dbReference>
<dbReference type="GO" id="GO:0008652">
    <property type="term" value="P:amino acid biosynthetic process"/>
    <property type="evidence" value="ECO:0007669"/>
    <property type="project" value="UniProtKB-KW"/>
</dbReference>
<dbReference type="GO" id="GO:0009073">
    <property type="term" value="P:aromatic amino acid family biosynthetic process"/>
    <property type="evidence" value="ECO:0007669"/>
    <property type="project" value="UniProtKB-KW"/>
</dbReference>
<dbReference type="GO" id="GO:0009423">
    <property type="term" value="P:chorismate biosynthetic process"/>
    <property type="evidence" value="ECO:0007669"/>
    <property type="project" value="UniProtKB-UniRule"/>
</dbReference>
<dbReference type="CDD" id="cd08195">
    <property type="entry name" value="DHQS"/>
    <property type="match status" value="1"/>
</dbReference>
<dbReference type="FunFam" id="3.40.50.1970:FF:000001">
    <property type="entry name" value="3-dehydroquinate synthase"/>
    <property type="match status" value="1"/>
</dbReference>
<dbReference type="Gene3D" id="3.40.50.1970">
    <property type="match status" value="1"/>
</dbReference>
<dbReference type="Gene3D" id="1.20.1090.10">
    <property type="entry name" value="Dehydroquinate synthase-like - alpha domain"/>
    <property type="match status" value="1"/>
</dbReference>
<dbReference type="HAMAP" id="MF_00110">
    <property type="entry name" value="DHQ_synthase"/>
    <property type="match status" value="1"/>
</dbReference>
<dbReference type="InterPro" id="IPR050071">
    <property type="entry name" value="Dehydroquinate_synthase"/>
</dbReference>
<dbReference type="InterPro" id="IPR016037">
    <property type="entry name" value="DHQ_synth_AroB"/>
</dbReference>
<dbReference type="InterPro" id="IPR030963">
    <property type="entry name" value="DHQ_synth_fam"/>
</dbReference>
<dbReference type="InterPro" id="IPR030960">
    <property type="entry name" value="DHQS/DOIS_N"/>
</dbReference>
<dbReference type="InterPro" id="IPR056179">
    <property type="entry name" value="DHQS_C"/>
</dbReference>
<dbReference type="NCBIfam" id="TIGR01357">
    <property type="entry name" value="aroB"/>
    <property type="match status" value="1"/>
</dbReference>
<dbReference type="PANTHER" id="PTHR43622">
    <property type="entry name" value="3-DEHYDROQUINATE SYNTHASE"/>
    <property type="match status" value="1"/>
</dbReference>
<dbReference type="PANTHER" id="PTHR43622:SF7">
    <property type="entry name" value="3-DEHYDROQUINATE SYNTHASE, CHLOROPLASTIC"/>
    <property type="match status" value="1"/>
</dbReference>
<dbReference type="Pfam" id="PF01761">
    <property type="entry name" value="DHQ_synthase"/>
    <property type="match status" value="1"/>
</dbReference>
<dbReference type="Pfam" id="PF24621">
    <property type="entry name" value="DHQS_C"/>
    <property type="match status" value="1"/>
</dbReference>
<dbReference type="PIRSF" id="PIRSF001455">
    <property type="entry name" value="DHQ_synth"/>
    <property type="match status" value="1"/>
</dbReference>
<dbReference type="SUPFAM" id="SSF56796">
    <property type="entry name" value="Dehydroquinate synthase-like"/>
    <property type="match status" value="1"/>
</dbReference>
<accession>Q07VC9</accession>
<organism>
    <name type="scientific">Rhodopseudomonas palustris (strain BisA53)</name>
    <dbReference type="NCBI Taxonomy" id="316055"/>
    <lineage>
        <taxon>Bacteria</taxon>
        <taxon>Pseudomonadati</taxon>
        <taxon>Pseudomonadota</taxon>
        <taxon>Alphaproteobacteria</taxon>
        <taxon>Hyphomicrobiales</taxon>
        <taxon>Nitrobacteraceae</taxon>
        <taxon>Rhodopseudomonas</taxon>
    </lineage>
</organism>
<gene>
    <name evidence="1" type="primary">aroB</name>
    <name type="ordered locus">RPE_0144</name>
</gene>
<evidence type="ECO:0000255" key="1">
    <source>
        <dbReference type="HAMAP-Rule" id="MF_00110"/>
    </source>
</evidence>
<name>AROB_RHOP5</name>
<keyword id="KW-0028">Amino-acid biosynthesis</keyword>
<keyword id="KW-0057">Aromatic amino acid biosynthesis</keyword>
<keyword id="KW-0170">Cobalt</keyword>
<keyword id="KW-0963">Cytoplasm</keyword>
<keyword id="KW-0456">Lyase</keyword>
<keyword id="KW-0479">Metal-binding</keyword>
<keyword id="KW-0520">NAD</keyword>
<keyword id="KW-0547">Nucleotide-binding</keyword>
<keyword id="KW-0862">Zinc</keyword>
<proteinExistence type="inferred from homology"/>
<feature type="chain" id="PRO_1000094585" description="3-dehydroquinate synthase">
    <location>
        <begin position="1"/>
        <end position="381"/>
    </location>
</feature>
<feature type="binding site" evidence="1">
    <location>
        <begin position="81"/>
        <end position="86"/>
    </location>
    <ligand>
        <name>NAD(+)</name>
        <dbReference type="ChEBI" id="CHEBI:57540"/>
    </ligand>
</feature>
<feature type="binding site" evidence="1">
    <location>
        <begin position="115"/>
        <end position="119"/>
    </location>
    <ligand>
        <name>NAD(+)</name>
        <dbReference type="ChEBI" id="CHEBI:57540"/>
    </ligand>
</feature>
<feature type="binding site" evidence="1">
    <location>
        <begin position="139"/>
        <end position="140"/>
    </location>
    <ligand>
        <name>NAD(+)</name>
        <dbReference type="ChEBI" id="CHEBI:57540"/>
    </ligand>
</feature>
<feature type="binding site" evidence="1">
    <location>
        <position position="152"/>
    </location>
    <ligand>
        <name>NAD(+)</name>
        <dbReference type="ChEBI" id="CHEBI:57540"/>
    </ligand>
</feature>
<feature type="binding site" evidence="1">
    <location>
        <position position="161"/>
    </location>
    <ligand>
        <name>NAD(+)</name>
        <dbReference type="ChEBI" id="CHEBI:57540"/>
    </ligand>
</feature>
<feature type="binding site" evidence="1">
    <location>
        <position position="194"/>
    </location>
    <ligand>
        <name>Zn(2+)</name>
        <dbReference type="ChEBI" id="CHEBI:29105"/>
    </ligand>
</feature>
<feature type="binding site" evidence="1">
    <location>
        <position position="256"/>
    </location>
    <ligand>
        <name>Zn(2+)</name>
        <dbReference type="ChEBI" id="CHEBI:29105"/>
    </ligand>
</feature>
<feature type="binding site" evidence="1">
    <location>
        <position position="274"/>
    </location>
    <ligand>
        <name>Zn(2+)</name>
        <dbReference type="ChEBI" id="CHEBI:29105"/>
    </ligand>
</feature>
<reference key="1">
    <citation type="submission" date="2006-09" db="EMBL/GenBank/DDBJ databases">
        <title>Complete sequence of Rhodopseudomonas palustris BisA53.</title>
        <authorList>
            <consortium name="US DOE Joint Genome Institute"/>
            <person name="Copeland A."/>
            <person name="Lucas S."/>
            <person name="Lapidus A."/>
            <person name="Barry K."/>
            <person name="Detter J.C."/>
            <person name="Glavina del Rio T."/>
            <person name="Hammon N."/>
            <person name="Israni S."/>
            <person name="Dalin E."/>
            <person name="Tice H."/>
            <person name="Pitluck S."/>
            <person name="Chain P."/>
            <person name="Malfatti S."/>
            <person name="Shin M."/>
            <person name="Vergez L."/>
            <person name="Schmutz J."/>
            <person name="Larimer F."/>
            <person name="Land M."/>
            <person name="Hauser L."/>
            <person name="Pelletier D.A."/>
            <person name="Kyrpides N."/>
            <person name="Kim E."/>
            <person name="Harwood C.S."/>
            <person name="Oda Y."/>
            <person name="Richardson P."/>
        </authorList>
    </citation>
    <scope>NUCLEOTIDE SEQUENCE [LARGE SCALE GENOMIC DNA]</scope>
    <source>
        <strain>BisA53</strain>
    </source>
</reference>
<protein>
    <recommendedName>
        <fullName evidence="1">3-dehydroquinate synthase</fullName>
        <shortName evidence="1">DHQS</shortName>
        <ecNumber evidence="1">4.2.3.4</ecNumber>
    </recommendedName>
</protein>
<sequence length="381" mass="40261">MTAPLNPSAPITVEVALGDRGYDIVIGRGGIESLGRRITALRPGARTAIVTDRSVAKHWLPRAQASLDETGIAHSTIVVEEGEVSKSYAGLQQVCEALIEAKIERNDLVIALGGGVVGDLAGFASSIVRRGLDFVQVPTSLLAQVDSSVGGKTGINSPHGKNLVGAFHQPVLVIADTAVLDTLSPRQFRAGYAEVVKYGALGDSGFFAWLEANHAEIVRGGAAREHAIATSCRAKAGVVARDERETGERALLNLGHTFGHALEAATGFSDRLFHGEGVAIGMVLAAEFSAERGMMPAQDATRLSHHLTAAGLPTRMQDIAGFKQEGLADADSLMALMAQDKKVKRGRLTFILMEAIGRAVIANDVEPAPVRDFLHRKLAES</sequence>